<gene>
    <name type="primary">lst-2</name>
    <name type="ORF">CBG14460</name>
</gene>
<protein>
    <recommendedName>
        <fullName>Lateral signaling target protein 2</fullName>
    </recommendedName>
</protein>
<organism>
    <name type="scientific">Caenorhabditis briggsae</name>
    <dbReference type="NCBI Taxonomy" id="6238"/>
    <lineage>
        <taxon>Eukaryota</taxon>
        <taxon>Metazoa</taxon>
        <taxon>Ecdysozoa</taxon>
        <taxon>Nematoda</taxon>
        <taxon>Chromadorea</taxon>
        <taxon>Rhabditida</taxon>
        <taxon>Rhabditina</taxon>
        <taxon>Rhabditomorpha</taxon>
        <taxon>Rhabditoidea</taxon>
        <taxon>Rhabditidae</taxon>
        <taxon>Peloderinae</taxon>
        <taxon>Caenorhabditis</taxon>
    </lineage>
</organism>
<reference key="1">
    <citation type="journal article" date="2003" name="PLoS Biol.">
        <title>The genome sequence of Caenorhabditis briggsae: a platform for comparative genomics.</title>
        <authorList>
            <person name="Stein L.D."/>
            <person name="Bao Z."/>
            <person name="Blasiar D."/>
            <person name="Blumenthal T."/>
            <person name="Brent M.R."/>
            <person name="Chen N."/>
            <person name="Chinwalla A."/>
            <person name="Clarke L."/>
            <person name="Clee C."/>
            <person name="Coghlan A."/>
            <person name="Coulson A."/>
            <person name="D'Eustachio P."/>
            <person name="Fitch D.H.A."/>
            <person name="Fulton L.A."/>
            <person name="Fulton R.E."/>
            <person name="Griffiths-Jones S."/>
            <person name="Harris T.W."/>
            <person name="Hillier L.W."/>
            <person name="Kamath R."/>
            <person name="Kuwabara P.E."/>
            <person name="Mardis E.R."/>
            <person name="Marra M.A."/>
            <person name="Miner T.L."/>
            <person name="Minx P."/>
            <person name="Mullikin J.C."/>
            <person name="Plumb R.W."/>
            <person name="Rogers J."/>
            <person name="Schein J.E."/>
            <person name="Sohrmann M."/>
            <person name="Spieth J."/>
            <person name="Stajich J.E."/>
            <person name="Wei C."/>
            <person name="Willey D."/>
            <person name="Wilson R.K."/>
            <person name="Durbin R.M."/>
            <person name="Waterston R.H."/>
        </authorList>
    </citation>
    <scope>NUCLEOTIDE SEQUENCE [LARGE SCALE GENOMIC DNA]</scope>
    <source>
        <strain>AF16</strain>
    </source>
</reference>
<evidence type="ECO:0000250" key="1"/>
<evidence type="ECO:0000255" key="2">
    <source>
        <dbReference type="PROSITE-ProRule" id="PRU00091"/>
    </source>
</evidence>
<evidence type="ECO:0000256" key="3">
    <source>
        <dbReference type="SAM" id="MobiDB-lite"/>
    </source>
</evidence>
<evidence type="ECO:0000305" key="4"/>
<sequence>MQSFRKIWNKPRPDDWMPLARFYYADSALNDIASELDSFDGRRDPDRCNALVTRLRVAQDRVLHIITEMLIHLYPREQDRACRDFRIKFPDEILHDTLPGQLWFGAECLSAGSNIIDHETESDLIRPLAKEVTKQLDILRDLLKNQSLRDPSAYNPVIKENLLKFDKLFAEFEYQYVSAMVPVKSVKEHDSQLDVAVLFSEVLSLALEKDLITQDLIDYCDPSVMIAIPRLGIVWGLLVYSEGALNVDVPAENLSEMFRPFYSLLVKIRNLLRILTPVELTRLETVLCKGETAVPEDSSSKLTMSDFRTNATDEEKAKNNQRVWMCDMPSDSTSSLDSDLRDSASEATSLASSGLTSPSSGSEDNLNRMVDKSDEELDDDVIETASSEENESDSNNENVEMVASSGDSSETESNSKENEEDVDEQATLQALAHETAEQLVAIKKKHEKHSKIIIPMQNEPRTLIDPKNLRSRFRSSEDLVHRLFVCIAGVADQLQTNYSSEIRKVLKIILQPSEVIPVYEVVNAQVANNSTEGEETGVEAQETLPLPAFMGVRWVPDEDCEQCTACSMPFNFVRRRHHCRNCGRIFCHKCSCNSISIPEHGYDRKVRVCNLCYVHRLNPFGCNEQSQASENNTGISSVAEQSSAQATSASS</sequence>
<keyword id="KW-0479">Metal-binding</keyword>
<keyword id="KW-1185">Reference proteome</keyword>
<keyword id="KW-0862">Zinc</keyword>
<keyword id="KW-0863">Zinc-finger</keyword>
<proteinExistence type="inferred from homology"/>
<name>LST2_CAEBR</name>
<comment type="function">
    <text evidence="1">Negative regulator of epidermal growth factor receptor (EGFR) signaling.</text>
</comment>
<comment type="similarity">
    <text evidence="4">Belongs to the lst-2 family.</text>
</comment>
<feature type="chain" id="PRO_0000378956" description="Lateral signaling target protein 2">
    <location>
        <begin position="1"/>
        <end position="651"/>
    </location>
</feature>
<feature type="zinc finger region" description="FYVE-type" evidence="2">
    <location>
        <begin position="557"/>
        <end position="617"/>
    </location>
</feature>
<feature type="region of interest" description="Disordered" evidence="3">
    <location>
        <begin position="294"/>
        <end position="425"/>
    </location>
</feature>
<feature type="compositionally biased region" description="Polar residues" evidence="3">
    <location>
        <begin position="300"/>
        <end position="310"/>
    </location>
</feature>
<feature type="compositionally biased region" description="Low complexity" evidence="3">
    <location>
        <begin position="345"/>
        <end position="363"/>
    </location>
</feature>
<feature type="compositionally biased region" description="Acidic residues" evidence="3">
    <location>
        <begin position="373"/>
        <end position="394"/>
    </location>
</feature>
<feature type="compositionally biased region" description="Low complexity" evidence="3">
    <location>
        <begin position="395"/>
        <end position="412"/>
    </location>
</feature>
<feature type="binding site" evidence="2">
    <location>
        <position position="563"/>
    </location>
    <ligand>
        <name>Zn(2+)</name>
        <dbReference type="ChEBI" id="CHEBI:29105"/>
        <label>1</label>
    </ligand>
</feature>
<feature type="binding site" evidence="2">
    <location>
        <position position="566"/>
    </location>
    <ligand>
        <name>Zn(2+)</name>
        <dbReference type="ChEBI" id="CHEBI:29105"/>
        <label>1</label>
    </ligand>
</feature>
<feature type="binding site" evidence="2">
    <location>
        <position position="579"/>
    </location>
    <ligand>
        <name>Zn(2+)</name>
        <dbReference type="ChEBI" id="CHEBI:29105"/>
        <label>2</label>
    </ligand>
</feature>
<feature type="binding site" evidence="2">
    <location>
        <position position="582"/>
    </location>
    <ligand>
        <name>Zn(2+)</name>
        <dbReference type="ChEBI" id="CHEBI:29105"/>
        <label>2</label>
    </ligand>
</feature>
<feature type="binding site" evidence="2">
    <location>
        <position position="587"/>
    </location>
    <ligand>
        <name>Zn(2+)</name>
        <dbReference type="ChEBI" id="CHEBI:29105"/>
        <label>1</label>
    </ligand>
</feature>
<feature type="binding site" evidence="2">
    <location>
        <position position="590"/>
    </location>
    <ligand>
        <name>Zn(2+)</name>
        <dbReference type="ChEBI" id="CHEBI:29105"/>
        <label>1</label>
    </ligand>
</feature>
<feature type="binding site" evidence="2">
    <location>
        <position position="609"/>
    </location>
    <ligand>
        <name>Zn(2+)</name>
        <dbReference type="ChEBI" id="CHEBI:29105"/>
        <label>2</label>
    </ligand>
</feature>
<feature type="binding site" evidence="2">
    <location>
        <position position="612"/>
    </location>
    <ligand>
        <name>Zn(2+)</name>
        <dbReference type="ChEBI" id="CHEBI:29105"/>
        <label>2</label>
    </ligand>
</feature>
<dbReference type="EMBL" id="HE600983">
    <property type="protein sequence ID" value="CAP32974.1"/>
    <property type="molecule type" value="Genomic_DNA"/>
</dbReference>
<dbReference type="SMR" id="A8XJZ8"/>
<dbReference type="FunCoup" id="A8XJZ8">
    <property type="interactions" value="835"/>
</dbReference>
<dbReference type="STRING" id="6238.A8XJZ8"/>
<dbReference type="KEGG" id="cbr:CBG_14460"/>
<dbReference type="CTD" id="8586531"/>
<dbReference type="WormBase" id="CBG14460">
    <property type="protein sequence ID" value="CBP41975"/>
    <property type="gene ID" value="WBGene00034944"/>
    <property type="gene designation" value="Cbr-lst-2"/>
</dbReference>
<dbReference type="eggNOG" id="KOG1819">
    <property type="taxonomic scope" value="Eukaryota"/>
</dbReference>
<dbReference type="HOGENOM" id="CLU_007360_1_1_1"/>
<dbReference type="InParanoid" id="A8XJZ8"/>
<dbReference type="OMA" id="NLSEMFR"/>
<dbReference type="Proteomes" id="UP000008549">
    <property type="component" value="Unassembled WGS sequence"/>
</dbReference>
<dbReference type="GO" id="GO:0031901">
    <property type="term" value="C:early endosome membrane"/>
    <property type="evidence" value="ECO:0000318"/>
    <property type="project" value="GO_Central"/>
</dbReference>
<dbReference type="GO" id="GO:0008270">
    <property type="term" value="F:zinc ion binding"/>
    <property type="evidence" value="ECO:0007669"/>
    <property type="project" value="UniProtKB-KW"/>
</dbReference>
<dbReference type="GO" id="GO:0042059">
    <property type="term" value="P:negative regulation of epidermal growth factor receptor signaling pathway"/>
    <property type="evidence" value="ECO:0000318"/>
    <property type="project" value="GO_Central"/>
</dbReference>
<dbReference type="CDD" id="cd15731">
    <property type="entry name" value="FYVE_LST2"/>
    <property type="match status" value="1"/>
</dbReference>
<dbReference type="Gene3D" id="3.30.40.10">
    <property type="entry name" value="Zinc/RING finger domain, C3HC4 (zinc finger)"/>
    <property type="match status" value="1"/>
</dbReference>
<dbReference type="InterPro" id="IPR043269">
    <property type="entry name" value="FYVE_LST2"/>
</dbReference>
<dbReference type="InterPro" id="IPR051118">
    <property type="entry name" value="LST-2"/>
</dbReference>
<dbReference type="InterPro" id="IPR000306">
    <property type="entry name" value="Znf_FYVE"/>
</dbReference>
<dbReference type="InterPro" id="IPR017455">
    <property type="entry name" value="Znf_FYVE-rel"/>
</dbReference>
<dbReference type="InterPro" id="IPR011011">
    <property type="entry name" value="Znf_FYVE_PHD"/>
</dbReference>
<dbReference type="InterPro" id="IPR013083">
    <property type="entry name" value="Znf_RING/FYVE/PHD"/>
</dbReference>
<dbReference type="PANTHER" id="PTHR46465">
    <property type="entry name" value="LATERAL SIGNALING TARGET PROTEIN 2 HOMOLOG"/>
    <property type="match status" value="1"/>
</dbReference>
<dbReference type="PANTHER" id="PTHR46465:SF2">
    <property type="entry name" value="LATERAL SIGNALING TARGET PROTEIN 2 HOMOLOG"/>
    <property type="match status" value="1"/>
</dbReference>
<dbReference type="Pfam" id="PF01363">
    <property type="entry name" value="FYVE"/>
    <property type="match status" value="1"/>
</dbReference>
<dbReference type="SMART" id="SM00064">
    <property type="entry name" value="FYVE"/>
    <property type="match status" value="1"/>
</dbReference>
<dbReference type="SUPFAM" id="SSF57903">
    <property type="entry name" value="FYVE/PHD zinc finger"/>
    <property type="match status" value="1"/>
</dbReference>
<dbReference type="PROSITE" id="PS50178">
    <property type="entry name" value="ZF_FYVE"/>
    <property type="match status" value="1"/>
</dbReference>
<accession>A8XJZ8</accession>